<sequence>MYAVFQSGGKQHRVAPGHTVRLEKLEVATGSTVEFDQVLLIADGEKVHVGAPLVAGGKVVAEVVSHGRGEKVTIVKFRRRKHHDKKLGHRQWFTEVKITAINA</sequence>
<accession>Q8EB80</accession>
<name>RL21_SHEON</name>
<protein>
    <recommendedName>
        <fullName evidence="1">Large ribosomal subunit protein bL21</fullName>
    </recommendedName>
    <alternativeName>
        <fullName evidence="2">50S ribosomal protein L21</fullName>
    </alternativeName>
</protein>
<comment type="function">
    <text evidence="1">This protein binds to 23S rRNA in the presence of protein L20.</text>
</comment>
<comment type="subunit">
    <text evidence="1">Part of the 50S ribosomal subunit. Contacts protein L20.</text>
</comment>
<comment type="similarity">
    <text evidence="1">Belongs to the bacterial ribosomal protein bL21 family.</text>
</comment>
<reference key="1">
    <citation type="journal article" date="2002" name="Nat. Biotechnol.">
        <title>Genome sequence of the dissimilatory metal ion-reducing bacterium Shewanella oneidensis.</title>
        <authorList>
            <person name="Heidelberg J.F."/>
            <person name="Paulsen I.T."/>
            <person name="Nelson K.E."/>
            <person name="Gaidos E.J."/>
            <person name="Nelson W.C."/>
            <person name="Read T.D."/>
            <person name="Eisen J.A."/>
            <person name="Seshadri R."/>
            <person name="Ward N.L."/>
            <person name="Methe B.A."/>
            <person name="Clayton R.A."/>
            <person name="Meyer T."/>
            <person name="Tsapin A."/>
            <person name="Scott J."/>
            <person name="Beanan M.J."/>
            <person name="Brinkac L.M."/>
            <person name="Daugherty S.C."/>
            <person name="DeBoy R.T."/>
            <person name="Dodson R.J."/>
            <person name="Durkin A.S."/>
            <person name="Haft D.H."/>
            <person name="Kolonay J.F."/>
            <person name="Madupu R."/>
            <person name="Peterson J.D."/>
            <person name="Umayam L.A."/>
            <person name="White O."/>
            <person name="Wolf A.M."/>
            <person name="Vamathevan J.J."/>
            <person name="Weidman J.F."/>
            <person name="Impraim M."/>
            <person name="Lee K."/>
            <person name="Berry K.J."/>
            <person name="Lee C."/>
            <person name="Mueller J."/>
            <person name="Khouri H.M."/>
            <person name="Gill J."/>
            <person name="Utterback T.R."/>
            <person name="McDonald L.A."/>
            <person name="Feldblyum T.V."/>
            <person name="Smith H.O."/>
            <person name="Venter J.C."/>
            <person name="Nealson K.H."/>
            <person name="Fraser C.M."/>
        </authorList>
    </citation>
    <scope>NUCLEOTIDE SEQUENCE [LARGE SCALE GENOMIC DNA]</scope>
    <source>
        <strain>ATCC 700550 / JCM 31522 / CIP 106686 / LMG 19005 / NCIMB 14063 / MR-1</strain>
    </source>
</reference>
<proteinExistence type="inferred from homology"/>
<feature type="chain" id="PRO_0000269376" description="Large ribosomal subunit protein bL21">
    <location>
        <begin position="1"/>
        <end position="103"/>
    </location>
</feature>
<dbReference type="EMBL" id="AE014299">
    <property type="protein sequence ID" value="AAN56638.1"/>
    <property type="molecule type" value="Genomic_DNA"/>
</dbReference>
<dbReference type="RefSeq" id="NP_719194.1">
    <property type="nucleotide sequence ID" value="NC_004347.2"/>
</dbReference>
<dbReference type="RefSeq" id="WP_011073451.1">
    <property type="nucleotide sequence ID" value="NZ_CP053946.1"/>
</dbReference>
<dbReference type="SMR" id="Q8EB80"/>
<dbReference type="STRING" id="211586.SO_3652"/>
<dbReference type="PaxDb" id="211586-SO_3652"/>
<dbReference type="GeneID" id="94729147"/>
<dbReference type="KEGG" id="son:SO_3652"/>
<dbReference type="PATRIC" id="fig|211586.12.peg.3540"/>
<dbReference type="eggNOG" id="COG0261">
    <property type="taxonomic scope" value="Bacteria"/>
</dbReference>
<dbReference type="HOGENOM" id="CLU_061463_3_3_6"/>
<dbReference type="OrthoDB" id="9813334at2"/>
<dbReference type="PhylomeDB" id="Q8EB80"/>
<dbReference type="BioCyc" id="SONE211586:G1GMP-3400-MONOMER"/>
<dbReference type="Proteomes" id="UP000008186">
    <property type="component" value="Chromosome"/>
</dbReference>
<dbReference type="GO" id="GO:0005737">
    <property type="term" value="C:cytoplasm"/>
    <property type="evidence" value="ECO:0007669"/>
    <property type="project" value="UniProtKB-ARBA"/>
</dbReference>
<dbReference type="GO" id="GO:1990904">
    <property type="term" value="C:ribonucleoprotein complex"/>
    <property type="evidence" value="ECO:0007669"/>
    <property type="project" value="UniProtKB-KW"/>
</dbReference>
<dbReference type="GO" id="GO:0005840">
    <property type="term" value="C:ribosome"/>
    <property type="evidence" value="ECO:0007669"/>
    <property type="project" value="UniProtKB-KW"/>
</dbReference>
<dbReference type="GO" id="GO:0019843">
    <property type="term" value="F:rRNA binding"/>
    <property type="evidence" value="ECO:0007669"/>
    <property type="project" value="UniProtKB-UniRule"/>
</dbReference>
<dbReference type="GO" id="GO:0003735">
    <property type="term" value="F:structural constituent of ribosome"/>
    <property type="evidence" value="ECO:0000318"/>
    <property type="project" value="GO_Central"/>
</dbReference>
<dbReference type="GO" id="GO:0006412">
    <property type="term" value="P:translation"/>
    <property type="evidence" value="ECO:0007669"/>
    <property type="project" value="UniProtKB-UniRule"/>
</dbReference>
<dbReference type="HAMAP" id="MF_01363">
    <property type="entry name" value="Ribosomal_bL21"/>
    <property type="match status" value="1"/>
</dbReference>
<dbReference type="InterPro" id="IPR028909">
    <property type="entry name" value="bL21-like"/>
</dbReference>
<dbReference type="InterPro" id="IPR036164">
    <property type="entry name" value="bL21-like_sf"/>
</dbReference>
<dbReference type="InterPro" id="IPR001787">
    <property type="entry name" value="Ribosomal_bL21"/>
</dbReference>
<dbReference type="InterPro" id="IPR018258">
    <property type="entry name" value="Ribosomal_bL21_CS"/>
</dbReference>
<dbReference type="NCBIfam" id="TIGR00061">
    <property type="entry name" value="L21"/>
    <property type="match status" value="1"/>
</dbReference>
<dbReference type="PANTHER" id="PTHR21349">
    <property type="entry name" value="50S RIBOSOMAL PROTEIN L21"/>
    <property type="match status" value="1"/>
</dbReference>
<dbReference type="PANTHER" id="PTHR21349:SF0">
    <property type="entry name" value="LARGE RIBOSOMAL SUBUNIT PROTEIN BL21M"/>
    <property type="match status" value="1"/>
</dbReference>
<dbReference type="Pfam" id="PF00829">
    <property type="entry name" value="Ribosomal_L21p"/>
    <property type="match status" value="1"/>
</dbReference>
<dbReference type="SUPFAM" id="SSF141091">
    <property type="entry name" value="L21p-like"/>
    <property type="match status" value="1"/>
</dbReference>
<dbReference type="PROSITE" id="PS01169">
    <property type="entry name" value="RIBOSOMAL_L21"/>
    <property type="match status" value="1"/>
</dbReference>
<organism>
    <name type="scientific">Shewanella oneidensis (strain ATCC 700550 / JCM 31522 / CIP 106686 / LMG 19005 / NCIMB 14063 / MR-1)</name>
    <dbReference type="NCBI Taxonomy" id="211586"/>
    <lineage>
        <taxon>Bacteria</taxon>
        <taxon>Pseudomonadati</taxon>
        <taxon>Pseudomonadota</taxon>
        <taxon>Gammaproteobacteria</taxon>
        <taxon>Alteromonadales</taxon>
        <taxon>Shewanellaceae</taxon>
        <taxon>Shewanella</taxon>
    </lineage>
</organism>
<keyword id="KW-1185">Reference proteome</keyword>
<keyword id="KW-0687">Ribonucleoprotein</keyword>
<keyword id="KW-0689">Ribosomal protein</keyword>
<keyword id="KW-0694">RNA-binding</keyword>
<keyword id="KW-0699">rRNA-binding</keyword>
<evidence type="ECO:0000255" key="1">
    <source>
        <dbReference type="HAMAP-Rule" id="MF_01363"/>
    </source>
</evidence>
<evidence type="ECO:0000305" key="2"/>
<gene>
    <name evidence="1" type="primary">rplU</name>
    <name type="ordered locus">SO_3652</name>
</gene>